<name>PK1_STRTO</name>
<organism>
    <name type="scientific">Streptomyces toyocaensis</name>
    <dbReference type="NCBI Taxonomy" id="55952"/>
    <lineage>
        <taxon>Bacteria</taxon>
        <taxon>Bacillati</taxon>
        <taxon>Actinomycetota</taxon>
        <taxon>Actinomycetes</taxon>
        <taxon>Kitasatosporales</taxon>
        <taxon>Streptomycetaceae</taxon>
        <taxon>Streptomyces</taxon>
    </lineage>
</organism>
<protein>
    <recommendedName>
        <fullName>Serine/threonine-protein kinase PK-1</fullName>
        <shortName>stoPK-1</shortName>
        <ecNumber>2.7.11.1</ecNumber>
    </recommendedName>
</protein>
<accession>Q9KIG4</accession>
<comment type="catalytic activity">
    <reaction>
        <text>L-seryl-[protein] + ATP = O-phospho-L-seryl-[protein] + ADP + H(+)</text>
        <dbReference type="Rhea" id="RHEA:17989"/>
        <dbReference type="Rhea" id="RHEA-COMP:9863"/>
        <dbReference type="Rhea" id="RHEA-COMP:11604"/>
        <dbReference type="ChEBI" id="CHEBI:15378"/>
        <dbReference type="ChEBI" id="CHEBI:29999"/>
        <dbReference type="ChEBI" id="CHEBI:30616"/>
        <dbReference type="ChEBI" id="CHEBI:83421"/>
        <dbReference type="ChEBI" id="CHEBI:456216"/>
        <dbReference type="EC" id="2.7.11.1"/>
    </reaction>
</comment>
<comment type="catalytic activity">
    <reaction>
        <text>L-threonyl-[protein] + ATP = O-phospho-L-threonyl-[protein] + ADP + H(+)</text>
        <dbReference type="Rhea" id="RHEA:46608"/>
        <dbReference type="Rhea" id="RHEA-COMP:11060"/>
        <dbReference type="Rhea" id="RHEA-COMP:11605"/>
        <dbReference type="ChEBI" id="CHEBI:15378"/>
        <dbReference type="ChEBI" id="CHEBI:30013"/>
        <dbReference type="ChEBI" id="CHEBI:30616"/>
        <dbReference type="ChEBI" id="CHEBI:61977"/>
        <dbReference type="ChEBI" id="CHEBI:456216"/>
        <dbReference type="EC" id="2.7.11.1"/>
    </reaction>
</comment>
<comment type="PTM">
    <text evidence="5">Autophosphorylated on threonine residue(s).</text>
</comment>
<comment type="similarity">
    <text evidence="1">Belongs to the protein kinase superfamily. Ser/Thr protein kinase family.</text>
</comment>
<gene>
    <name type="primary">spk1</name>
</gene>
<sequence length="641" mass="67973">MDTTLQDPLVGQVLDGRYRVDARIAVGGMATVYRAVDTRLDRVLALKVMHPSLAADASFVERFIREAKSVARLAHPNVVQVFDQGTDGAYVYLAMEYIAGCTLRDVLRERGALQPRAALDILEPVLAALGAAHRAGFVHRDMKPENVLIGDDGRVKVADFGLVRAVDSVTNTTGTVLGTVSYLAPEQIEHGTADPRVDVYACGILLYEMLTGEKPHDGDSPAIVLYKHLHDDVPPPSAAVPGMAYELDELVASATARGPEVRPHDAVALLARARDARARLGDEQLDAVPPQALASEHDNADDRTSVIPRALTVRRPLPVNEEDEGADAAHRTSRFRSPPPLPPRGRTALRRGPMAIVIGVLLVLGLGAGVWYINSGQFTKVPPLLAKTEKEARDRLADAGLDAGQVSEAYSDTVERGSVATDPEAGARIRTNDSVSLTLSKGPRTVRVPDLDGYPQDKARSLLEDEGLKPGMSTREFSDSVPAGSVISTEPGKGTEVRAGSAVALTVSKGAPVDVPDVAGDDLEDARAELEEAGLEVKVATERVTSEYDAGRVARQDPGPGGRVAEGDTVTLTLSKGPEMAEVPDVVGDSVGEAREKLEGAGFRVDEDRGLLGLFGDTVKGQSVDGGDSAPKGSTITIEIR</sequence>
<feature type="chain" id="PRO_0000171238" description="Serine/threonine-protein kinase PK-1">
    <location>
        <begin position="1"/>
        <end position="641"/>
    </location>
</feature>
<feature type="domain" description="Protein kinase" evidence="1">
    <location>
        <begin position="18"/>
        <end position="280"/>
    </location>
</feature>
<feature type="domain" description="PASTA 1" evidence="2">
    <location>
        <begin position="375"/>
        <end position="441"/>
    </location>
</feature>
<feature type="domain" description="PASTA 2" evidence="2">
    <location>
        <begin position="442"/>
        <end position="508"/>
    </location>
</feature>
<feature type="domain" description="PASTA 3" evidence="2">
    <location>
        <begin position="509"/>
        <end position="576"/>
    </location>
</feature>
<feature type="domain" description="PASTA 4" evidence="2">
    <location>
        <begin position="577"/>
        <end position="641"/>
    </location>
</feature>
<feature type="region of interest" description="Disordered" evidence="4">
    <location>
        <begin position="317"/>
        <end position="347"/>
    </location>
</feature>
<feature type="region of interest" description="Disordered" evidence="4">
    <location>
        <begin position="469"/>
        <end position="494"/>
    </location>
</feature>
<feature type="active site" description="Proton acceptor" evidence="1 3">
    <location>
        <position position="141"/>
    </location>
</feature>
<feature type="binding site" evidence="1">
    <location>
        <begin position="24"/>
        <end position="32"/>
    </location>
    <ligand>
        <name>ATP</name>
        <dbReference type="ChEBI" id="CHEBI:30616"/>
    </ligand>
</feature>
<feature type="binding site" evidence="1">
    <location>
        <position position="47"/>
    </location>
    <ligand>
        <name>ATP</name>
        <dbReference type="ChEBI" id="CHEBI:30616"/>
    </ligand>
</feature>
<dbReference type="EC" id="2.7.11.1"/>
<dbReference type="EMBL" id="AF233851">
    <property type="protein sequence ID" value="AAF79944.1"/>
    <property type="molecule type" value="Genomic_DNA"/>
</dbReference>
<dbReference type="SMR" id="Q9KIG4"/>
<dbReference type="STRING" id="55952.BU52_09510"/>
<dbReference type="eggNOG" id="COG0515">
    <property type="taxonomic scope" value="Bacteria"/>
</dbReference>
<dbReference type="eggNOG" id="COG2815">
    <property type="taxonomic scope" value="Bacteria"/>
</dbReference>
<dbReference type="GO" id="GO:0005524">
    <property type="term" value="F:ATP binding"/>
    <property type="evidence" value="ECO:0007669"/>
    <property type="project" value="UniProtKB-KW"/>
</dbReference>
<dbReference type="GO" id="GO:0106310">
    <property type="term" value="F:protein serine kinase activity"/>
    <property type="evidence" value="ECO:0007669"/>
    <property type="project" value="RHEA"/>
</dbReference>
<dbReference type="GO" id="GO:0004674">
    <property type="term" value="F:protein serine/threonine kinase activity"/>
    <property type="evidence" value="ECO:0007669"/>
    <property type="project" value="UniProtKB-KW"/>
</dbReference>
<dbReference type="CDD" id="cd06577">
    <property type="entry name" value="PASTA_pknB"/>
    <property type="match status" value="4"/>
</dbReference>
<dbReference type="CDD" id="cd14014">
    <property type="entry name" value="STKc_PknB_like"/>
    <property type="match status" value="1"/>
</dbReference>
<dbReference type="FunFam" id="1.10.510.10:FF:000021">
    <property type="entry name" value="Serine/threonine protein kinase"/>
    <property type="match status" value="1"/>
</dbReference>
<dbReference type="FunFam" id="3.30.200.20:FF:000035">
    <property type="entry name" value="Serine/threonine protein kinase Stk1"/>
    <property type="match status" value="1"/>
</dbReference>
<dbReference type="Gene3D" id="3.30.10.20">
    <property type="match status" value="4"/>
</dbReference>
<dbReference type="Gene3D" id="3.30.200.20">
    <property type="entry name" value="Phosphorylase Kinase, domain 1"/>
    <property type="match status" value="1"/>
</dbReference>
<dbReference type="Gene3D" id="1.10.510.10">
    <property type="entry name" value="Transferase(Phosphotransferase) domain 1"/>
    <property type="match status" value="1"/>
</dbReference>
<dbReference type="InterPro" id="IPR011009">
    <property type="entry name" value="Kinase-like_dom_sf"/>
</dbReference>
<dbReference type="InterPro" id="IPR005543">
    <property type="entry name" value="PASTA_dom"/>
</dbReference>
<dbReference type="InterPro" id="IPR000719">
    <property type="entry name" value="Prot_kinase_dom"/>
</dbReference>
<dbReference type="InterPro" id="IPR008271">
    <property type="entry name" value="Ser/Thr_kinase_AS"/>
</dbReference>
<dbReference type="NCBIfam" id="NF033483">
    <property type="entry name" value="PknB_PASTA_kin"/>
    <property type="match status" value="1"/>
</dbReference>
<dbReference type="PANTHER" id="PTHR43289">
    <property type="entry name" value="MITOGEN-ACTIVATED PROTEIN KINASE KINASE KINASE 20-RELATED"/>
    <property type="match status" value="1"/>
</dbReference>
<dbReference type="PANTHER" id="PTHR43289:SF34">
    <property type="entry name" value="SERINE_THREONINE-PROTEIN KINASE YBDM-RELATED"/>
    <property type="match status" value="1"/>
</dbReference>
<dbReference type="Pfam" id="PF03793">
    <property type="entry name" value="PASTA"/>
    <property type="match status" value="4"/>
</dbReference>
<dbReference type="Pfam" id="PF00069">
    <property type="entry name" value="Pkinase"/>
    <property type="match status" value="1"/>
</dbReference>
<dbReference type="SMART" id="SM00740">
    <property type="entry name" value="PASTA"/>
    <property type="match status" value="4"/>
</dbReference>
<dbReference type="SMART" id="SM00220">
    <property type="entry name" value="S_TKc"/>
    <property type="match status" value="1"/>
</dbReference>
<dbReference type="SUPFAM" id="SSF54184">
    <property type="entry name" value="Penicillin-binding protein 2x (pbp-2x), c-terminal domain"/>
    <property type="match status" value="1"/>
</dbReference>
<dbReference type="SUPFAM" id="SSF56112">
    <property type="entry name" value="Protein kinase-like (PK-like)"/>
    <property type="match status" value="1"/>
</dbReference>
<dbReference type="PROSITE" id="PS51178">
    <property type="entry name" value="PASTA"/>
    <property type="match status" value="4"/>
</dbReference>
<dbReference type="PROSITE" id="PS50011">
    <property type="entry name" value="PROTEIN_KINASE_DOM"/>
    <property type="match status" value="1"/>
</dbReference>
<dbReference type="PROSITE" id="PS00108">
    <property type="entry name" value="PROTEIN_KINASE_ST"/>
    <property type="match status" value="1"/>
</dbReference>
<keyword id="KW-0067">ATP-binding</keyword>
<keyword id="KW-0418">Kinase</keyword>
<keyword id="KW-0547">Nucleotide-binding</keyword>
<keyword id="KW-0597">Phosphoprotein</keyword>
<keyword id="KW-0677">Repeat</keyword>
<keyword id="KW-0723">Serine/threonine-protein kinase</keyword>
<keyword id="KW-0808">Transferase</keyword>
<reference key="1">
    <citation type="submission" date="2000-02" db="EMBL/GenBank/DDBJ databases">
        <title>Characterization of stoPK-1, a novel protein Thr kinase from the glycopeptide antibiotic producer Streptomyces toyocaensis NRRL 15009.</title>
        <authorList>
            <person name="Neu J.M."/>
            <person name="Wright G.D."/>
        </authorList>
    </citation>
    <scope>NUCLEOTIDE SEQUENCE [GENOMIC DNA]</scope>
    <source>
        <strain>NRRL 15009</strain>
    </source>
</reference>
<reference key="2">
    <citation type="journal article" date="2002" name="Mol. Microbiol.">
        <title>StoPK-1, a serine/threonine protein kinase from the glycopeptide antibiotic producer Streptomyces toyocaensis NRRL 15009, affects oxidative stress response.</title>
        <authorList>
            <person name="Neu J.M."/>
            <person name="MacMillan S.V."/>
            <person name="Nodwell J.R."/>
            <person name="Wright G.D."/>
        </authorList>
    </citation>
    <scope>PHOSPHORYLATION</scope>
</reference>
<evidence type="ECO:0000255" key="1">
    <source>
        <dbReference type="PROSITE-ProRule" id="PRU00159"/>
    </source>
</evidence>
<evidence type="ECO:0000255" key="2">
    <source>
        <dbReference type="PROSITE-ProRule" id="PRU00528"/>
    </source>
</evidence>
<evidence type="ECO:0000255" key="3">
    <source>
        <dbReference type="PROSITE-ProRule" id="PRU10027"/>
    </source>
</evidence>
<evidence type="ECO:0000256" key="4">
    <source>
        <dbReference type="SAM" id="MobiDB-lite"/>
    </source>
</evidence>
<evidence type="ECO:0000269" key="5">
    <source>
    </source>
</evidence>
<proteinExistence type="evidence at protein level"/>